<reference key="1">
    <citation type="journal article" date="1986" name="J. Gen. Virol.">
        <title>The complete DNA sequence of varicella-zoster virus.</title>
        <authorList>
            <person name="Davison A.J."/>
            <person name="Scott J.E."/>
        </authorList>
    </citation>
    <scope>NUCLEOTIDE SEQUENCE [LARGE SCALE GENOMIC DNA]</scope>
</reference>
<reference key="2">
    <citation type="journal article" date="2008" name="J. Virol.">
        <title>Functions of Varicella-zoster virus ORF23 capsid protein in viral replication and the pathogenesis of skin infection.</title>
        <authorList>
            <person name="Chaudhuri V."/>
            <person name="Sommer M."/>
            <person name="Rajamani J."/>
            <person name="Zerboni L."/>
            <person name="Arvin A.M."/>
        </authorList>
    </citation>
    <scope>FUNCTION</scope>
    <scope>SUBCELLULAR LOCATION</scope>
</reference>
<dbReference type="EMBL" id="X04370">
    <property type="protein sequence ID" value="CAA27906.1"/>
    <property type="molecule type" value="Genomic_DNA"/>
</dbReference>
<dbReference type="PIR" id="E27343">
    <property type="entry name" value="WZBE23"/>
</dbReference>
<dbReference type="SMR" id="P09279"/>
<dbReference type="Proteomes" id="UP000002602">
    <property type="component" value="Genome"/>
</dbReference>
<dbReference type="GO" id="GO:0042025">
    <property type="term" value="C:host cell nucleus"/>
    <property type="evidence" value="ECO:0007669"/>
    <property type="project" value="UniProtKB-SubCell"/>
</dbReference>
<dbReference type="GO" id="GO:0019028">
    <property type="term" value="C:viral capsid"/>
    <property type="evidence" value="ECO:0007669"/>
    <property type="project" value="UniProtKB-UniRule"/>
</dbReference>
<dbReference type="GO" id="GO:0016032">
    <property type="term" value="P:viral process"/>
    <property type="evidence" value="ECO:0007669"/>
    <property type="project" value="UniProtKB-UniRule"/>
</dbReference>
<dbReference type="HAMAP" id="MF_04020">
    <property type="entry name" value="HSV_SCP_alphahv"/>
    <property type="match status" value="1"/>
</dbReference>
<dbReference type="InterPro" id="IPR007584">
    <property type="entry name" value="Herpes_UL35"/>
</dbReference>
<dbReference type="Pfam" id="PF04496">
    <property type="entry name" value="Herpes_UL35"/>
    <property type="match status" value="1"/>
</dbReference>
<sequence>MTQPASSRVVFDPSNPTTFSVEAIAAYTPVALIRLLNASGPLQPGHRVDIADARSIYTVGAAASAARARANHNANTIRRTAMFAETDPMTWLRPTVGLKRTFNPRIIRPQPPNPSMSLGISGPTILPQKTQSADQSALQQPAALAFSGSSPQHPPPQTTSASVGQQQHVVSGSSGQQPQQGAQSSTVQPTTGSPPAAQGVPQSTPPPTQNTPQGGKGQTLSHTGQSGNASRSRRV</sequence>
<organismHost>
    <name type="scientific">Homo sapiens</name>
    <name type="common">Human</name>
    <dbReference type="NCBI Taxonomy" id="9606"/>
</organismHost>
<name>SCP_VZVD</name>
<comment type="function">
    <text evidence="1 4">Participates in the assembly of the infectious particles by decorating the outer surface of the capsid shell and thus forming a layer between the capsid and the tegument. Complexes composed of the capsid protein VP5 and VP26 assemble together in the host cytoplasm and are translocated to the nucleus, where they accumulate and participate in capsid assembly (By similarity).</text>
</comment>
<comment type="function">
    <text evidence="2">Participates in the assembly of the infectious particles by decorating the outer surface of the capsid shell and thus forming a layer between the capsid and the tegument. Complexes composed of the major capsid protein and small capsomere-interacting protein/SCP assemble together in the host cytoplasm and are translocated to the nucleus, where they accumulate and participate in capsid assembly.</text>
</comment>
<comment type="subunit">
    <text evidence="2">Interacts with the major capsid protein/MCP.</text>
</comment>
<comment type="subcellular location">
    <subcellularLocation>
        <location evidence="2">Virion</location>
    </subcellularLocation>
    <subcellularLocation>
        <location evidence="2 4">Host nucleus</location>
    </subcellularLocation>
</comment>
<comment type="similarity">
    <text evidence="2">Belongs to the herpesviridae small capsomere-interacting protein family.</text>
</comment>
<feature type="chain" id="PRO_0000115737" description="Small capsomere-interacting protein">
    <location>
        <begin position="1"/>
        <end position="235"/>
    </location>
</feature>
<feature type="region of interest" description="Disordered" evidence="3">
    <location>
        <begin position="104"/>
        <end position="235"/>
    </location>
</feature>
<feature type="compositionally biased region" description="Polar residues" evidence="3">
    <location>
        <begin position="127"/>
        <end position="139"/>
    </location>
</feature>
<feature type="compositionally biased region" description="Low complexity" evidence="3">
    <location>
        <begin position="158"/>
        <end position="188"/>
    </location>
</feature>
<feature type="compositionally biased region" description="Polar residues" evidence="3">
    <location>
        <begin position="220"/>
        <end position="235"/>
    </location>
</feature>
<organism>
    <name type="scientific">Varicella-zoster virus (strain Dumas)</name>
    <name type="common">HHV-3</name>
    <name type="synonym">Human herpesvirus 3</name>
    <dbReference type="NCBI Taxonomy" id="10338"/>
    <lineage>
        <taxon>Viruses</taxon>
        <taxon>Duplodnaviria</taxon>
        <taxon>Heunggongvirae</taxon>
        <taxon>Peploviricota</taxon>
        <taxon>Herviviricetes</taxon>
        <taxon>Herpesvirales</taxon>
        <taxon>Orthoherpesviridae</taxon>
        <taxon>Alphaherpesvirinae</taxon>
        <taxon>Varicellovirus</taxon>
        <taxon>Varicellovirus humanalpha3</taxon>
        <taxon>Human herpesvirus 3</taxon>
    </lineage>
</organism>
<gene>
    <name evidence="2" type="primary">SCP</name>
    <name type="ordered locus">23</name>
</gene>
<accession>P09279</accession>
<keyword id="KW-0167">Capsid protein</keyword>
<keyword id="KW-1048">Host nucleus</keyword>
<keyword id="KW-1185">Reference proteome</keyword>
<keyword id="KW-0946">Virion</keyword>
<protein>
    <recommendedName>
        <fullName evidence="2">Small capsomere-interacting protein</fullName>
    </recommendedName>
</protein>
<proteinExistence type="inferred from homology"/>
<evidence type="ECO:0000250" key="1"/>
<evidence type="ECO:0000255" key="2">
    <source>
        <dbReference type="HAMAP-Rule" id="MF_04020"/>
    </source>
</evidence>
<evidence type="ECO:0000256" key="3">
    <source>
        <dbReference type="SAM" id="MobiDB-lite"/>
    </source>
</evidence>
<evidence type="ECO:0000269" key="4">
    <source>
    </source>
</evidence>